<name>UD14_HUMAN</name>
<protein>
    <recommendedName>
        <fullName evidence="17">UDP-glucuronosyltransferase 1A4</fullName>
        <shortName evidence="14">UGT1A4</shortName>
        <ecNumber evidence="4 7 13">2.4.1.17</ecNumber>
    </recommendedName>
    <alternativeName>
        <fullName>Bilirubin-specific UDPGT isozyme 2</fullName>
        <shortName>hUG-BR2</shortName>
    </alternativeName>
    <alternativeName>
        <fullName>UDP-glucuronosyltransferase 1-4</fullName>
        <shortName>UDPGT 1-4</shortName>
        <shortName>UGT1*4</shortName>
        <shortName>UGT1-04</shortName>
        <shortName>UGT1.4</shortName>
    </alternativeName>
    <alternativeName>
        <fullName>UDP-glucuronosyltransferase 1-D</fullName>
        <shortName>UGT-1D</shortName>
        <shortName>UGT1D</shortName>
    </alternativeName>
</protein>
<gene>
    <name evidence="25" type="primary">UGT1A4</name>
    <name type="synonym">GNT1</name>
    <name type="synonym">UGT1</name>
</gene>
<dbReference type="EC" id="2.4.1.17" evidence="4 7 13"/>
<dbReference type="EMBL" id="M84128">
    <property type="protein sequence ID" value="AAA61249.1"/>
    <property type="molecule type" value="Genomic_DNA"/>
</dbReference>
<dbReference type="EMBL" id="M84124">
    <property type="protein sequence ID" value="AAA61247.1"/>
    <property type="status" value="ALT_SEQ"/>
    <property type="molecule type" value="Genomic_DNA"/>
</dbReference>
<dbReference type="EMBL" id="M84122">
    <property type="protein sequence ID" value="AAA61247.1"/>
    <property type="status" value="JOINED"/>
    <property type="molecule type" value="Genomic_DNA"/>
</dbReference>
<dbReference type="EMBL" id="M84123">
    <property type="protein sequence ID" value="AAA61247.1"/>
    <property type="status" value="JOINED"/>
    <property type="molecule type" value="Genomic_DNA"/>
</dbReference>
<dbReference type="EMBL" id="M57951">
    <property type="protein sequence ID" value="AAA63196.1"/>
    <property type="molecule type" value="mRNA"/>
</dbReference>
<dbReference type="EMBL" id="AF297093">
    <property type="protein sequence ID" value="AAG30422.1"/>
    <property type="molecule type" value="Genomic_DNA"/>
</dbReference>
<dbReference type="EMBL" id="AY435139">
    <property type="protein sequence ID" value="AAR95640.1"/>
    <property type="molecule type" value="mRNA"/>
</dbReference>
<dbReference type="EMBL" id="AK313623">
    <property type="protein sequence ID" value="BAG36384.1"/>
    <property type="molecule type" value="mRNA"/>
</dbReference>
<dbReference type="EMBL" id="DQ364249">
    <property type="protein sequence ID" value="ABC96773.1"/>
    <property type="molecule type" value="mRNA"/>
</dbReference>
<dbReference type="EMBL" id="AC006985">
    <property type="status" value="NOT_ANNOTATED_CDS"/>
    <property type="molecule type" value="Genomic_DNA"/>
</dbReference>
<dbReference type="EMBL" id="AC114812">
    <property type="status" value="NOT_ANNOTATED_CDS"/>
    <property type="molecule type" value="Genomic_DNA"/>
</dbReference>
<dbReference type="EMBL" id="CH471063">
    <property type="protein sequence ID" value="EAW71061.1"/>
    <property type="molecule type" value="Genomic_DNA"/>
</dbReference>
<dbReference type="EMBL" id="BC139784">
    <property type="protein sequence ID" value="AAI39785.1"/>
    <property type="molecule type" value="mRNA"/>
</dbReference>
<dbReference type="CCDS" id="CCDS33405.1">
    <molecule id="P22310-1"/>
</dbReference>
<dbReference type="RefSeq" id="NP_009051.1">
    <molecule id="P22310-1"/>
    <property type="nucleotide sequence ID" value="NM_007120.3"/>
</dbReference>
<dbReference type="SMR" id="P22310"/>
<dbReference type="BioGRID" id="120086">
    <property type="interactions" value="15"/>
</dbReference>
<dbReference type="FunCoup" id="P22310">
    <property type="interactions" value="343"/>
</dbReference>
<dbReference type="IntAct" id="P22310">
    <property type="interactions" value="13"/>
</dbReference>
<dbReference type="STRING" id="9606.ENSP00000362508"/>
<dbReference type="BindingDB" id="P22310"/>
<dbReference type="ChEMBL" id="CHEMBL3619"/>
<dbReference type="DrugBank" id="DB00321">
    <property type="generic name" value="Amitriptyline"/>
</dbReference>
<dbReference type="DrugBank" id="DB01217">
    <property type="generic name" value="Anastrozole"/>
</dbReference>
<dbReference type="DrugBank" id="DB00714">
    <property type="generic name" value="Apomorphine"/>
</dbReference>
<dbReference type="DrugBank" id="DB06216">
    <property type="generic name" value="Asenapine"/>
</dbReference>
<dbReference type="DrugBank" id="DB06401">
    <property type="generic name" value="Bazedoxifene"/>
</dbReference>
<dbReference type="DrugBank" id="DB00349">
    <property type="generic name" value="Clobazam"/>
</dbReference>
<dbReference type="DrugBank" id="DB00363">
    <property type="generic name" value="Clozapine"/>
</dbReference>
<dbReference type="DrugBank" id="DB14635">
    <property type="generic name" value="Curcumin sulfate"/>
</dbReference>
<dbReference type="DrugBank" id="DB00924">
    <property type="generic name" value="Cyclobenzaprine"/>
</dbReference>
<dbReference type="DrugBank" id="DB00434">
    <property type="generic name" value="Cyproheptadine"/>
</dbReference>
<dbReference type="DrugBank" id="DB05187">
    <property type="generic name" value="Elafibranor"/>
</dbReference>
<dbReference type="DrugBank" id="DB11979">
    <property type="generic name" value="Elagolix"/>
</dbReference>
<dbReference type="DrugBank" id="DB13874">
    <property type="generic name" value="Enasidenib"/>
</dbReference>
<dbReference type="DrugBank" id="DB11827">
    <property type="generic name" value="Ertugliflozin"/>
</dbReference>
<dbReference type="DrugBank" id="DB00783">
    <property type="generic name" value="Estradiol"/>
</dbReference>
<dbReference type="DrugBank" id="DB00977">
    <property type="generic name" value="Ethinylestradiol"/>
</dbReference>
<dbReference type="DrugBank" id="DB04953">
    <property type="generic name" value="Ezogabine"/>
</dbReference>
<dbReference type="DrugBank" id="DB11796">
    <property type="generic name" value="Fostemsavir"/>
</dbReference>
<dbReference type="DrugBank" id="DB12471">
    <property type="generic name" value="Ibrexafungerp"/>
</dbReference>
<dbReference type="DrugBank" id="DB09054">
    <property type="generic name" value="Idelalisib"/>
</dbReference>
<dbReference type="DrugBank" id="DB09262">
    <property type="generic name" value="Imidafenacin"/>
</dbReference>
<dbReference type="DrugBank" id="DB00920">
    <property type="generic name" value="Ketotifen"/>
</dbReference>
<dbReference type="DrugBank" id="DB00555">
    <property type="generic name" value="Lamotrigine"/>
</dbReference>
<dbReference type="DrugBank" id="DB06077">
    <property type="generic name" value="Lumateperone"/>
</dbReference>
<dbReference type="DrugBank" id="DB09241">
    <property type="generic name" value="Methylene blue"/>
</dbReference>
<dbReference type="DrugBank" id="DB00683">
    <property type="generic name" value="Midazolam"/>
</dbReference>
<dbReference type="DrugBank" id="DB05018">
    <property type="generic name" value="Migalastat"/>
</dbReference>
<dbReference type="DrugBank" id="DB08804">
    <property type="generic name" value="Nandrolone decanoate"/>
</dbReference>
<dbReference type="DrugBank" id="DB00334">
    <property type="generic name" value="Olanzapine"/>
</dbReference>
<dbReference type="DrugBank" id="DB11837">
    <property type="generic name" value="Osilodrostat"/>
</dbReference>
<dbReference type="DrugBank" id="DB00910">
    <property type="generic name" value="Paricalcitol"/>
</dbReference>
<dbReference type="DrugBank" id="DB12978">
    <property type="generic name" value="Pexidartinib"/>
</dbReference>
<dbReference type="DrugBank" id="DB00252">
    <property type="generic name" value="Phenytoin"/>
</dbReference>
<dbReference type="DrugBank" id="DB00960">
    <property type="generic name" value="Pindolol"/>
</dbReference>
<dbReference type="DrugBank" id="DB00794">
    <property type="generic name" value="Primidone"/>
</dbReference>
<dbReference type="DrugBank" id="DB12914">
    <property type="generic name" value="Resmetirom"/>
</dbReference>
<dbReference type="DrugBank" id="DB00503">
    <property type="generic name" value="Ritonavir"/>
</dbReference>
<dbReference type="DrugBank" id="DB12020">
    <property type="generic name" value="Tecovirimat"/>
</dbReference>
<dbReference type="DrugBank" id="DB00871">
    <property type="generic name" value="Terbutaline"/>
</dbReference>
<dbReference type="DrugBank" id="DB00831">
    <property type="generic name" value="Trifluoperazine"/>
</dbReference>
<dbReference type="DrugBank" id="DB00197">
    <property type="generic name" value="Troglitazone"/>
</dbReference>
<dbReference type="DrugBank" id="DB00313">
    <property type="generic name" value="Valproic acid"/>
</dbReference>
<dbReference type="DrugBank" id="DB17097">
    <property type="generic name" value="Vorasidenib"/>
</dbReference>
<dbReference type="DrugCentral" id="P22310"/>
<dbReference type="SwissLipids" id="SLP:000001872"/>
<dbReference type="CAZy" id="GT1">
    <property type="family name" value="Glycosyltransferase Family 1"/>
</dbReference>
<dbReference type="GlyConnect" id="1876">
    <property type="glycosylation" value="2 N-Linked glycans (1 site)"/>
</dbReference>
<dbReference type="GlyCosmos" id="P22310">
    <property type="glycosylation" value="4 sites, 2 glycans"/>
</dbReference>
<dbReference type="GlyGen" id="P22310">
    <property type="glycosylation" value="4 sites, 2 N-linked glycans (1 site)"/>
</dbReference>
<dbReference type="iPTMnet" id="P22310"/>
<dbReference type="PhosphoSitePlus" id="P22310"/>
<dbReference type="BioMuta" id="UGT1A4"/>
<dbReference type="DMDM" id="136731"/>
<dbReference type="jPOST" id="P22310"/>
<dbReference type="MassIVE" id="P22310"/>
<dbReference type="PaxDb" id="9606-ENSP00000362508"/>
<dbReference type="PeptideAtlas" id="P22310"/>
<dbReference type="ProteomicsDB" id="53982">
    <molecule id="P22310-1"/>
</dbReference>
<dbReference type="ProteomicsDB" id="7279"/>
<dbReference type="Antibodypedia" id="35064">
    <property type="antibodies" value="84 antibodies from 21 providers"/>
</dbReference>
<dbReference type="DNASU" id="54657"/>
<dbReference type="Ensembl" id="ENST00000373409.8">
    <molecule id="P22310-1"/>
    <property type="protein sequence ID" value="ENSP00000362508.4"/>
    <property type="gene ID" value="ENSG00000244474.6"/>
</dbReference>
<dbReference type="Ensembl" id="ENST00000450233.1">
    <molecule id="P22310-2"/>
    <property type="protein sequence ID" value="ENSP00000408608.1"/>
    <property type="gene ID" value="ENSG00000244474.6"/>
</dbReference>
<dbReference type="GeneID" id="54657"/>
<dbReference type="KEGG" id="hsa:54657"/>
<dbReference type="MANE-Select" id="ENST00000373409.8">
    <property type="protein sequence ID" value="ENSP00000362508.4"/>
    <property type="RefSeq nucleotide sequence ID" value="NM_007120.3"/>
    <property type="RefSeq protein sequence ID" value="NP_009051.1"/>
</dbReference>
<dbReference type="UCSC" id="uc002vux.4">
    <molecule id="P22310-1"/>
    <property type="organism name" value="human"/>
</dbReference>
<dbReference type="AGR" id="HGNC:12536"/>
<dbReference type="CTD" id="54657"/>
<dbReference type="DisGeNET" id="54657"/>
<dbReference type="GeneCards" id="UGT1A4"/>
<dbReference type="HGNC" id="HGNC:12536">
    <property type="gene designation" value="UGT1A4"/>
</dbReference>
<dbReference type="HPA" id="ENSG00000244474">
    <property type="expression patterns" value="Tissue enriched (liver)"/>
</dbReference>
<dbReference type="MalaCards" id="UGT1A4"/>
<dbReference type="MIM" id="606429">
    <property type="type" value="gene"/>
</dbReference>
<dbReference type="neXtProt" id="NX_P22310"/>
<dbReference type="OpenTargets" id="ENSG00000244474"/>
<dbReference type="PharmGKB" id="PA37179"/>
<dbReference type="VEuPathDB" id="HostDB:ENSG00000244474"/>
<dbReference type="eggNOG" id="KOG1192">
    <property type="taxonomic scope" value="Eukaryota"/>
</dbReference>
<dbReference type="GeneTree" id="ENSGT00940000162976"/>
<dbReference type="HOGENOM" id="CLU_012949_1_3_1"/>
<dbReference type="InParanoid" id="P22310"/>
<dbReference type="OMA" id="ESMNERC"/>
<dbReference type="OrthoDB" id="9475613at2759"/>
<dbReference type="PAN-GO" id="P22310">
    <property type="GO annotations" value="3 GO annotations based on evolutionary models"/>
</dbReference>
<dbReference type="PhylomeDB" id="P22310"/>
<dbReference type="TreeFam" id="TF315472"/>
<dbReference type="BioCyc" id="MetaCyc:HS11970-MONOMER"/>
<dbReference type="BRENDA" id="2.4.1.17">
    <property type="organism ID" value="2681"/>
</dbReference>
<dbReference type="PathwayCommons" id="P22310"/>
<dbReference type="Reactome" id="R-HSA-156588">
    <property type="pathway name" value="Glucuronidation"/>
</dbReference>
<dbReference type="Reactome" id="R-HSA-189483">
    <property type="pathway name" value="Heme degradation"/>
</dbReference>
<dbReference type="Reactome" id="R-HSA-5579016">
    <property type="pathway name" value="Defective UGT1A4 causes hyperbilirubinemia"/>
</dbReference>
<dbReference type="Reactome" id="R-HSA-9749641">
    <property type="pathway name" value="Aspirin ADME"/>
</dbReference>
<dbReference type="SABIO-RK" id="P22310"/>
<dbReference type="SignaLink" id="P22310"/>
<dbReference type="SIGNOR" id="P22310"/>
<dbReference type="BioGRID-ORCS" id="54657">
    <property type="hits" value="8 hits in 1019 CRISPR screens"/>
</dbReference>
<dbReference type="GeneWiki" id="UGT1A4"/>
<dbReference type="GenomeRNAi" id="54657"/>
<dbReference type="Pharos" id="P22310">
    <property type="development level" value="Tbio"/>
</dbReference>
<dbReference type="PRO" id="PR:P22310"/>
<dbReference type="Proteomes" id="UP000005640">
    <property type="component" value="Chromosome 2"/>
</dbReference>
<dbReference type="RNAct" id="P22310">
    <property type="molecule type" value="protein"/>
</dbReference>
<dbReference type="Bgee" id="ENSG00000244474">
    <property type="expression patterns" value="Expressed in right lobe of liver and 35 other cell types or tissues"/>
</dbReference>
<dbReference type="GO" id="GO:0005783">
    <property type="term" value="C:endoplasmic reticulum"/>
    <property type="evidence" value="ECO:0000314"/>
    <property type="project" value="UniProtKB"/>
</dbReference>
<dbReference type="GO" id="GO:0005789">
    <property type="term" value="C:endoplasmic reticulum membrane"/>
    <property type="evidence" value="ECO:0000304"/>
    <property type="project" value="Reactome"/>
</dbReference>
<dbReference type="GO" id="GO:0019899">
    <property type="term" value="F:enzyme binding"/>
    <property type="evidence" value="ECO:0000353"/>
    <property type="project" value="BHF-UCL"/>
</dbReference>
<dbReference type="GO" id="GO:0004857">
    <property type="term" value="F:enzyme inhibitor activity"/>
    <property type="evidence" value="ECO:0000250"/>
    <property type="project" value="BHF-UCL"/>
</dbReference>
<dbReference type="GO" id="GO:0015020">
    <property type="term" value="F:glucuronosyltransferase activity"/>
    <property type="evidence" value="ECO:0000314"/>
    <property type="project" value="UniProtKB"/>
</dbReference>
<dbReference type="GO" id="GO:0046982">
    <property type="term" value="F:protein heterodimerization activity"/>
    <property type="evidence" value="ECO:0000353"/>
    <property type="project" value="BHF-UCL"/>
</dbReference>
<dbReference type="GO" id="GO:0042803">
    <property type="term" value="F:protein homodimerization activity"/>
    <property type="evidence" value="ECO:0000314"/>
    <property type="project" value="UniProtKB"/>
</dbReference>
<dbReference type="GO" id="GO:0006789">
    <property type="term" value="P:bilirubin conjugation"/>
    <property type="evidence" value="ECO:0000304"/>
    <property type="project" value="Reactome"/>
</dbReference>
<dbReference type="GO" id="GO:0042167">
    <property type="term" value="P:heme catabolic process"/>
    <property type="evidence" value="ECO:0000304"/>
    <property type="project" value="Reactome"/>
</dbReference>
<dbReference type="GO" id="GO:0045922">
    <property type="term" value="P:negative regulation of fatty acid metabolic process"/>
    <property type="evidence" value="ECO:0000250"/>
    <property type="project" value="BHF-UCL"/>
</dbReference>
<dbReference type="GO" id="GO:0070640">
    <property type="term" value="P:vitamin D3 metabolic process"/>
    <property type="evidence" value="ECO:0000314"/>
    <property type="project" value="UniProtKB"/>
</dbReference>
<dbReference type="CDD" id="cd03784">
    <property type="entry name" value="GT1_Gtf-like"/>
    <property type="match status" value="1"/>
</dbReference>
<dbReference type="FunFam" id="3.40.50.2000:FF:000001">
    <property type="entry name" value="UDP-glucuronosyltransferase"/>
    <property type="match status" value="1"/>
</dbReference>
<dbReference type="FunFam" id="3.40.50.2000:FF:000066">
    <property type="entry name" value="UDP-glucuronosyltransferase 1-1"/>
    <property type="match status" value="1"/>
</dbReference>
<dbReference type="Gene3D" id="3.40.50.2000">
    <property type="entry name" value="Glycogen Phosphorylase B"/>
    <property type="match status" value="2"/>
</dbReference>
<dbReference type="InterPro" id="IPR050271">
    <property type="entry name" value="UDP-glycosyltransferase"/>
</dbReference>
<dbReference type="InterPro" id="IPR002213">
    <property type="entry name" value="UDP_glucos_trans"/>
</dbReference>
<dbReference type="InterPro" id="IPR035595">
    <property type="entry name" value="UDP_glycos_trans_CS"/>
</dbReference>
<dbReference type="PANTHER" id="PTHR48043">
    <property type="entry name" value="EG:EG0003.4 PROTEIN-RELATED"/>
    <property type="match status" value="1"/>
</dbReference>
<dbReference type="PANTHER" id="PTHR48043:SF161">
    <property type="entry name" value="UDP GLUCURONOSYLTRANSFERASE FAMILY 1 MEMBER A1"/>
    <property type="match status" value="1"/>
</dbReference>
<dbReference type="Pfam" id="PF00201">
    <property type="entry name" value="UDPGT"/>
    <property type="match status" value="1"/>
</dbReference>
<dbReference type="SUPFAM" id="SSF53756">
    <property type="entry name" value="UDP-Glycosyltransferase/glycogen phosphorylase"/>
    <property type="match status" value="1"/>
</dbReference>
<dbReference type="PROSITE" id="PS00375">
    <property type="entry name" value="UDPGT"/>
    <property type="match status" value="1"/>
</dbReference>
<accession>P22310</accession>
<accession>B2R937</accession>
<accession>B8K288</accession>
<accession>Q5DT00</accession>
<evidence type="ECO:0000255" key="1"/>
<evidence type="ECO:0000269" key="2">
    <source>
    </source>
</evidence>
<evidence type="ECO:0000269" key="3">
    <source>
    </source>
</evidence>
<evidence type="ECO:0000269" key="4">
    <source>
    </source>
</evidence>
<evidence type="ECO:0000269" key="5">
    <source>
    </source>
</evidence>
<evidence type="ECO:0000269" key="6">
    <source>
    </source>
</evidence>
<evidence type="ECO:0000269" key="7">
    <source>
    </source>
</evidence>
<evidence type="ECO:0000269" key="8">
    <source>
    </source>
</evidence>
<evidence type="ECO:0000269" key="9">
    <source>
    </source>
</evidence>
<evidence type="ECO:0000269" key="10">
    <source>
    </source>
</evidence>
<evidence type="ECO:0000269" key="11">
    <source>
    </source>
</evidence>
<evidence type="ECO:0000269" key="12">
    <source>
    </source>
</evidence>
<evidence type="ECO:0000269" key="13">
    <source>
    </source>
</evidence>
<evidence type="ECO:0000303" key="14">
    <source>
    </source>
</evidence>
<evidence type="ECO:0000303" key="15">
    <source>
    </source>
</evidence>
<evidence type="ECO:0000303" key="16">
    <source>
    </source>
</evidence>
<evidence type="ECO:0000303" key="17">
    <source>
    </source>
</evidence>
<evidence type="ECO:0000303" key="18">
    <source ref="6"/>
</evidence>
<evidence type="ECO:0000305" key="19"/>
<evidence type="ECO:0000305" key="20">
    <source>
    </source>
</evidence>
<evidence type="ECO:0000305" key="21">
    <source>
    </source>
</evidence>
<evidence type="ECO:0000305" key="22">
    <source>
    </source>
</evidence>
<evidence type="ECO:0000305" key="23">
    <source>
    </source>
</evidence>
<evidence type="ECO:0000305" key="24">
    <source>
    </source>
</evidence>
<evidence type="ECO:0000312" key="25">
    <source>
        <dbReference type="HGNC" id="HGNC:12536"/>
    </source>
</evidence>
<sequence length="534" mass="60025">MARGLQVPLPRLATGLLLLLSVQPWAESGKVLVVPTDGSPWLSMREALRELHARGHQAVVLTPEVNMHIKEEKFFTLTAYAVPWTQKEFDRVTLGYTQGFFETEHLLKRYSRSMAIMNNVSLALHRCCVELLHNEALIRHLNATSFDVVLTDPVNLCGAVLAKYLSIPAVFFWRYIPCDLDFKGTQCPNPSSYIPKLLTTNSDHMTFLQRVKNMLYPLALSYICHTFSAPYASLASELFQREVSVVDLVSYASVWLFRGDFVMDYPRPIMPNMVFIGGINCANGKPLSQEFEAYINASGEHGIVVFSLGSMVSEIPEKKAMAIADALGKIPQTVLWRYTGTRPSNLANNTILVKWLPQNDLLGHPMTRAFITHAGSHGVYESICNGVPMVMMPLFGDQMDNAKRMETKGAGVTLNVLEMTSEDLENALKAVINDKSYKENIMRLSSLHKDRPVEPLDLAVFWVEFVMRHKGAPHLRPAAHDLTWYQYHSLDVIGFLLAVVLTVAFITFKCCAYGYRKCLGKKGRVKKAHKSKTH</sequence>
<proteinExistence type="evidence at protein level"/>
<organism>
    <name type="scientific">Homo sapiens</name>
    <name type="common">Human</name>
    <dbReference type="NCBI Taxonomy" id="9606"/>
    <lineage>
        <taxon>Eukaryota</taxon>
        <taxon>Metazoa</taxon>
        <taxon>Chordata</taxon>
        <taxon>Craniata</taxon>
        <taxon>Vertebrata</taxon>
        <taxon>Euteleostomi</taxon>
        <taxon>Mammalia</taxon>
        <taxon>Eutheria</taxon>
        <taxon>Euarchontoglires</taxon>
        <taxon>Primates</taxon>
        <taxon>Haplorrhini</taxon>
        <taxon>Catarrhini</taxon>
        <taxon>Hominidae</taxon>
        <taxon>Homo</taxon>
    </lineage>
</organism>
<feature type="signal peptide" evidence="1">
    <location>
        <begin position="1"/>
        <end position="28"/>
    </location>
</feature>
<feature type="chain" id="PRO_0000036003" description="UDP-glucuronosyltransferase 1A4">
    <location>
        <begin position="29"/>
        <end position="534"/>
    </location>
</feature>
<feature type="transmembrane region" description="Helical" evidence="1">
    <location>
        <begin position="492"/>
        <end position="508"/>
    </location>
</feature>
<feature type="glycosylation site" description="N-linked (GlcNAc...) asparagine" evidence="1">
    <location>
        <position position="119"/>
    </location>
</feature>
<feature type="glycosylation site" description="N-linked (GlcNAc...) asparagine" evidence="9">
    <location>
        <position position="142"/>
    </location>
</feature>
<feature type="glycosylation site" description="N-linked (GlcNAc...) asparagine" evidence="1">
    <location>
        <position position="296"/>
    </location>
</feature>
<feature type="glycosylation site" description="N-linked (GlcNAc...) asparagine" evidence="9">
    <location>
        <position position="348"/>
    </location>
</feature>
<feature type="splice variant" id="VSP_053960" description="In isoform 2." evidence="15 18">
    <original>SYKENIMRLSSLHKDRPVEPLDLAVFWVEFVMRHKGAPHLRPAAHDLTWYQYHSLDVIGFLLAVVLTVAFITFKCCAYGYRKCLGKKGRVKKAHKSKTH</original>
    <variation>RKKQQSGRQM</variation>
    <location>
        <begin position="436"/>
        <end position="534"/>
    </location>
</feature>
<feature type="sequence variant" id="VAR_059844" description="In dbSNP:rs3892221.">
    <original>R</original>
    <variation>W</variation>
    <location>
        <position position="11"/>
    </location>
</feature>
<feature type="sequence variant" id="VAR_024684" description="In dbSNP:rs6755571." evidence="10">
    <original>P</original>
    <variation>T</variation>
    <location>
        <position position="24"/>
    </location>
</feature>
<feature type="sequence variant" id="VAR_058584" description="Increased glucuronosyltransferase activity towards calcidiol; dbSNP:rs2011425." evidence="3 10 13">
    <original>L</original>
    <variation>V</variation>
    <location>
        <position position="48"/>
    </location>
</feature>
<feature type="sequence variant" id="VAR_061870" description="In dbSNP:rs45621441.">
    <original>H</original>
    <variation>Y</variation>
    <location>
        <position position="68"/>
    </location>
</feature>
<feature type="sequence variant" id="VAR_052454" description="In dbSNP:rs45540231.">
    <original>I</original>
    <variation>F</variation>
    <location>
        <position position="176"/>
    </location>
</feature>
<comment type="function">
    <molecule>Isoform 1</molecule>
    <text evidence="4 7 13">UDP-glucuronosyltransferase (UGT) that catalyzes phase II biotransformation reactions in which lipophilic substrates are conjugated with glucuronic acid to increase the metabolite's water solubility, thereby facilitating excretion into either the urine or bile (PubMed:18177842, PubMed:24641623, PubMed:15231852). Essential for the elimination and detoxification of drugs, xenobiotics and endogenous compounds (PubMed:18177842). Involved in the glucuronidation of calcidiol, which is the major circulating form of vitamin D3 essential for the regulation of calcium and phosphate homeostasis (PubMed:24641623). Also glucuronidates the biologically active form of vitamin D3, calcitriol, probably leading to its biliary transport and intestinal reabsorption (PubMed:18177842). Involved in the glucuronidation of arachidonic acid (AA) and AA-derived eicosanoids including 15-HETE, 20-HETE and PGB1 (PubMed:15231852).</text>
</comment>
<comment type="function">
    <molecule>Isoform 2</molecule>
    <text evidence="6 11">Lacks UDP-glucuronosyltransferase (UGT) activity but acts as a negative regulator of isoform 1.</text>
</comment>
<comment type="catalytic activity">
    <reaction evidence="4 7 13">
        <text>glucuronate acceptor + UDP-alpha-D-glucuronate = acceptor beta-D-glucuronoside + UDP + H(+)</text>
        <dbReference type="Rhea" id="RHEA:21032"/>
        <dbReference type="ChEBI" id="CHEBI:15378"/>
        <dbReference type="ChEBI" id="CHEBI:58052"/>
        <dbReference type="ChEBI" id="CHEBI:58223"/>
        <dbReference type="ChEBI" id="CHEBI:132367"/>
        <dbReference type="ChEBI" id="CHEBI:132368"/>
        <dbReference type="EC" id="2.4.1.17"/>
    </reaction>
    <physiologicalReaction direction="left-to-right" evidence="20 22 24">
        <dbReference type="Rhea" id="RHEA:21033"/>
    </physiologicalReaction>
</comment>
<comment type="catalytic activity">
    <reaction evidence="13">
        <text>calcidiol + UDP-alpha-D-glucuronate = calcidiol 25-O-(beta-D-glucuronide) + UDP + H(+)</text>
        <dbReference type="Rhea" id="RHEA:55840"/>
        <dbReference type="ChEBI" id="CHEBI:15378"/>
        <dbReference type="ChEBI" id="CHEBI:17933"/>
        <dbReference type="ChEBI" id="CHEBI:58052"/>
        <dbReference type="ChEBI" id="CHEBI:58223"/>
        <dbReference type="ChEBI" id="CHEBI:139277"/>
    </reaction>
    <physiologicalReaction direction="left-to-right" evidence="24">
        <dbReference type="Rhea" id="RHEA:55841"/>
    </physiologicalReaction>
</comment>
<comment type="catalytic activity">
    <reaction evidence="13">
        <text>calcidiol + UDP-alpha-D-glucuronate = calcidiol 3-O-(beta-D-glucuronide) + UDP + H(+)</text>
        <dbReference type="Rhea" id="RHEA:55844"/>
        <dbReference type="ChEBI" id="CHEBI:15378"/>
        <dbReference type="ChEBI" id="CHEBI:17933"/>
        <dbReference type="ChEBI" id="CHEBI:58052"/>
        <dbReference type="ChEBI" id="CHEBI:58223"/>
        <dbReference type="ChEBI" id="CHEBI:139278"/>
    </reaction>
    <physiologicalReaction direction="left-to-right" evidence="24">
        <dbReference type="Rhea" id="RHEA:55845"/>
    </physiologicalReaction>
</comment>
<comment type="catalytic activity">
    <reaction evidence="7">
        <text>calcitriol + UDP-alpha-D-glucuronate = calcitriol 25-O-(beta-D-glucuronide) + UDP + H(+)</text>
        <dbReference type="Rhea" id="RHEA:55836"/>
        <dbReference type="ChEBI" id="CHEBI:15378"/>
        <dbReference type="ChEBI" id="CHEBI:17823"/>
        <dbReference type="ChEBI" id="CHEBI:58052"/>
        <dbReference type="ChEBI" id="CHEBI:58223"/>
        <dbReference type="ChEBI" id="CHEBI:139274"/>
    </reaction>
    <physiologicalReaction direction="left-to-right" evidence="22">
        <dbReference type="Rhea" id="RHEA:55837"/>
    </physiologicalReaction>
</comment>
<comment type="catalytic activity">
    <reaction evidence="4">
        <text>(5Z,8Z,11Z,14Z)-eicosatetraenoate + UDP-alpha-D-glucuronate = O-[(5Z),(8Z),(11Z),(14Z)-eicosatetraenoyl]-beta-D-glucuronate + UDP</text>
        <dbReference type="Rhea" id="RHEA:79915"/>
        <dbReference type="ChEBI" id="CHEBI:32395"/>
        <dbReference type="ChEBI" id="CHEBI:58052"/>
        <dbReference type="ChEBI" id="CHEBI:58223"/>
        <dbReference type="ChEBI" id="CHEBI:231327"/>
    </reaction>
    <physiologicalReaction direction="left-to-right" evidence="20">
        <dbReference type="Rhea" id="RHEA:79916"/>
    </physiologicalReaction>
</comment>
<comment type="catalytic activity">
    <reaction evidence="4">
        <text>15-hydroxy-(5Z,8Z,11Z,13E)-eicosatetraenoate + UDP-alpha-D-glucuronate = 15-O-(beta-D-glucuronosyl)-(5Z,8Z,11Z,14Z)-eicosatetraenoate + UDP + H(+)</text>
        <dbReference type="Rhea" id="RHEA:79919"/>
        <dbReference type="ChEBI" id="CHEBI:15378"/>
        <dbReference type="ChEBI" id="CHEBI:58052"/>
        <dbReference type="ChEBI" id="CHEBI:58223"/>
        <dbReference type="ChEBI" id="CHEBI:78832"/>
        <dbReference type="ChEBI" id="CHEBI:231329"/>
    </reaction>
    <physiologicalReaction direction="left-to-right" evidence="20">
        <dbReference type="Rhea" id="RHEA:79920"/>
    </physiologicalReaction>
</comment>
<comment type="catalytic activity">
    <reaction evidence="4">
        <text>20-hydroxy-(5Z,8Z,11Z,14Z)-eicosatetraenoate + UDP-alpha-D-glucuronate = 20-O-(beta-D-glucuronosyl)-(5Z,8Z,11Z,14Z)-eicosatetraenoate + UDP + H(+)</text>
        <dbReference type="Rhea" id="RHEA:79927"/>
        <dbReference type="ChEBI" id="CHEBI:15378"/>
        <dbReference type="ChEBI" id="CHEBI:58052"/>
        <dbReference type="ChEBI" id="CHEBI:58223"/>
        <dbReference type="ChEBI" id="CHEBI:76624"/>
        <dbReference type="ChEBI" id="CHEBI:231328"/>
    </reaction>
    <physiologicalReaction direction="left-to-right" evidence="20">
        <dbReference type="Rhea" id="RHEA:79928"/>
    </physiologicalReaction>
</comment>
<comment type="biophysicochemical properties">
    <kinetics>
        <KM evidence="13">6.39 uM for calcidiol (when assaying glucuronidation at position 25)</KM>
        <KM evidence="13">2.16 uM for calcidiol (when assaying glucuronidation at position 3)</KM>
        <KM evidence="13">4.19 uM for 5,6-trans-calcidiol (when assaying glucuronidation at position 25)</KM>
        <KM evidence="7">7.3 uM for calcitriol (when assaying glucuronidation at position 25)</KM>
        <KM evidence="8">10.6 uM for 17beta-estradiol/estradiol (when assaying glucuronidation at position 17)</KM>
        <KM evidence="8">21.7 uM for 17alpha-estradiol/epiestradiol (when assaying glucuronidation at position 17)</KM>
        <Vmax evidence="13">7.35 pmol/min/mg enzyme for the formation of calcidiol 25-O-(beta-D-glucuronate)</Vmax>
        <Vmax evidence="13">0.93 pmol/min/mg enzyme for the formation of calcidiol 3-O-(beta-D-glucuronate)</Vmax>
        <Vmax evidence="13">0.26 pmol/min/mg enzyme for the formation of 5,6-trans-calcidiol 25-O-(beta-D-glucuronate)</Vmax>
        <Vmax evidence="7">33.7 pmol/min/mg enzyme for the formation of calcitriol 25-O-(beta-D-glucuronate)</Vmax>
        <Vmax evidence="8">14.0 pmol/min/mg enzyme for the formation of 17beta-estradiol 17-O-(beta-D-glucuronate)</Vmax>
        <Vmax evidence="8">41.0 pmol/min/mg enzyme for the formation of 17alpha-estradiol 17-O-(beta-D-glucuronate)</Vmax>
        <Vmax evidence="12">5.5 pmol/min/mg enzyme for the formation of 16alpha,17beta-estriol 16-O-(beta-D-glucuronate)</Vmax>
        <Vmax evidence="12">4.1 pmol/min/mg enzyme for the formation of 16alpha,17alpha-estriol 16-O-(beta-D-glucuronate)</Vmax>
        <Vmax evidence="12">1.9 pmol/min/mg enzyme for the formation of 17beta-estradiol 17-O-(beta-D-glucuronate)</Vmax>
        <Vmax evidence="12">6.1 pmol/min/mg enzyme for the formation of 17alpha-estradiol 17-O-(beta-D-glucuronate)</Vmax>
        <text evidence="22 24">Some kinetic parameters were assessed using commercial enzymes, which may represent a mix of both active and inactive protein forms, and therefore modify the kinetic values.</text>
    </kinetics>
</comment>
<comment type="subunit">
    <text evidence="5 11 23">Homodimer (PubMed:17179145). Homooligomer (Probable). Interacts with UGT1A1, UGT1A3, UGT1A6, UGT1A7, UGT1A8, UGT1A9 and UGT1A10 to form heterodimers (PubMed:17179145). Isoform 1 interacts with isoform 2/i2 suggesting that oligomerization is involved in negative regulation of transferase activity by isoform 2. Isoform 1 also interacts with respective i2 isoforms of UGT1A1, UGT1A3, UGT1A6, UGT1A7, UGT1A8, UGT1A9 and UGT1A10 (PubMed:20610558).</text>
</comment>
<comment type="subcellular location">
    <subcellularLocation>
        <location evidence="21">Endoplasmic reticulum membrane</location>
        <topology evidence="1">Single-pass membrane protein</topology>
    </subcellularLocation>
</comment>
<comment type="alternative products">
    <event type="alternative splicing"/>
    <isoform>
        <id>P22310-1</id>
        <name>1</name>
        <name evidence="16">i1</name>
        <sequence type="displayed"/>
    </isoform>
    <isoform>
        <id>P22310-2</id>
        <name>2</name>
        <name evidence="16">i2</name>
        <name>UGT1A4s</name>
        <sequence type="described" ref="VSP_053960"/>
    </isoform>
</comment>
<comment type="tissue specificity">
    <molecule>Isoform 1</molecule>
    <text evidence="2 6">Expressed in liver (PubMed:1339448, PubMed:18004212). Expressed in kidney, colon and small intestine (PubMed:18004212). Not expressed in esophagus (PubMed:18004212). Not expressed in skin (PubMed:1339448).</text>
</comment>
<comment type="tissue specificity">
    <molecule>Isoform 2</molecule>
    <text evidence="6">Expressed in liver, kidney, colon, esophagus and small intestine.</text>
</comment>
<comment type="induction">
    <text evidence="2">Induced by phenobarbital.</text>
</comment>
<comment type="miscellaneous">
    <text evidence="6">UGT1A4 isoform is part of the UGT1A complex locus which displays alternative use of promoters, first exons and terminal exons. The locus is defined by 13 first exons, which are alternatively spliced to 3 other common exons and 2 alternative terminal exons 5. From the 27 possible mRNA isoforms, 9 produce functionally active polypeptides (UGT1A1, 1A3, 1A4, 1A5, 1A6, 1A7, 1A8, 1A9 and 1A10) called isoforms 1 (i1). Use of an alternative exon 5 (5b) as terminal exon is leading to 9 additional alternatively spliced products termed isoforms i2 and which lack transferase activity.</text>
</comment>
<comment type="similarity">
    <text evidence="19">Belongs to the UDP-glycosyltransferase family.</text>
</comment>
<reference key="1">
    <citation type="journal article" date="1991" name="J. Biol. Chem.">
        <title>Cloning of two human liver bilirubin UDP-glucuronosyltransferase cDNAs with expression in COS-1 cells.</title>
        <authorList>
            <person name="Ritter J.K."/>
            <person name="Crawford J.M."/>
            <person name="Owens I.S."/>
        </authorList>
    </citation>
    <scope>NUCLEOTIDE SEQUENCE [GENOMIC DNA / MRNA]</scope>
    <source>
        <tissue>Liver</tissue>
    </source>
</reference>
<reference key="2">
    <citation type="journal article" date="1992" name="J. Biol. Chem.">
        <title>A novel complex locus UGT1 encodes human bilirubin, phenol, and other UDP-glucuronosyltransferase isozymes with identical carboxyl termini.</title>
        <authorList>
            <person name="Ritter J.K."/>
            <person name="Chen F."/>
            <person name="Sheen Y.Y."/>
            <person name="Tran H.M."/>
            <person name="Kimura S."/>
            <person name="Yeatman M.T."/>
            <person name="Owens I.S."/>
        </authorList>
    </citation>
    <scope>NUCLEOTIDE SEQUENCE [GENOMIC DNA]</scope>
    <scope>TISSUE SPECIFICITY (ISOFORM 1)</scope>
</reference>
<reference key="3">
    <citation type="journal article" date="2001" name="Pharmacogenetics">
        <title>Thirteen UDP-glucuronosyltransferase genes are encoded at the human UGT1 gene complex locus.</title>
        <authorList>
            <person name="Gong Q.H."/>
            <person name="Cho J.W."/>
            <person name="Huang T."/>
            <person name="Potter C."/>
            <person name="Gholami N."/>
            <person name="Basu N.K."/>
            <person name="Kubota S."/>
            <person name="Carvalho S."/>
            <person name="Pennington M.W."/>
            <person name="Owens I.S."/>
            <person name="Popescu N.C."/>
        </authorList>
    </citation>
    <scope>NUCLEOTIDE SEQUENCE [GENOMIC DNA]</scope>
</reference>
<reference key="4">
    <citation type="journal article" date="2004" name="Genome Res.">
        <title>Multiple variable first exons: a mechanism for cell- and tissue-specific gene regulation.</title>
        <authorList>
            <person name="Zhang T."/>
            <person name="Haws P."/>
            <person name="Wu Q."/>
        </authorList>
    </citation>
    <scope>NUCLEOTIDE SEQUENCE [MRNA] (ISOFORM 1)</scope>
</reference>
<reference key="5">
    <citation type="journal article" date="2004" name="Nat. Genet.">
        <title>Complete sequencing and characterization of 21,243 full-length human cDNAs.</title>
        <authorList>
            <person name="Ota T."/>
            <person name="Suzuki Y."/>
            <person name="Nishikawa T."/>
            <person name="Otsuki T."/>
            <person name="Sugiyama T."/>
            <person name="Irie R."/>
            <person name="Wakamatsu A."/>
            <person name="Hayashi K."/>
            <person name="Sato H."/>
            <person name="Nagai K."/>
            <person name="Kimura K."/>
            <person name="Makita H."/>
            <person name="Sekine M."/>
            <person name="Obayashi M."/>
            <person name="Nishi T."/>
            <person name="Shibahara T."/>
            <person name="Tanaka T."/>
            <person name="Ishii S."/>
            <person name="Yamamoto J."/>
            <person name="Saito K."/>
            <person name="Kawai Y."/>
            <person name="Isono Y."/>
            <person name="Nakamura Y."/>
            <person name="Nagahari K."/>
            <person name="Murakami K."/>
            <person name="Yasuda T."/>
            <person name="Iwayanagi T."/>
            <person name="Wagatsuma M."/>
            <person name="Shiratori A."/>
            <person name="Sudo H."/>
            <person name="Hosoiri T."/>
            <person name="Kaku Y."/>
            <person name="Kodaira H."/>
            <person name="Kondo H."/>
            <person name="Sugawara M."/>
            <person name="Takahashi M."/>
            <person name="Kanda K."/>
            <person name="Yokoi T."/>
            <person name="Furuya T."/>
            <person name="Kikkawa E."/>
            <person name="Omura Y."/>
            <person name="Abe K."/>
            <person name="Kamihara K."/>
            <person name="Katsuta N."/>
            <person name="Sato K."/>
            <person name="Tanikawa M."/>
            <person name="Yamazaki M."/>
            <person name="Ninomiya K."/>
            <person name="Ishibashi T."/>
            <person name="Yamashita H."/>
            <person name="Murakawa K."/>
            <person name="Fujimori K."/>
            <person name="Tanai H."/>
            <person name="Kimata M."/>
            <person name="Watanabe M."/>
            <person name="Hiraoka S."/>
            <person name="Chiba Y."/>
            <person name="Ishida S."/>
            <person name="Ono Y."/>
            <person name="Takiguchi S."/>
            <person name="Watanabe S."/>
            <person name="Yosida M."/>
            <person name="Hotuta T."/>
            <person name="Kusano J."/>
            <person name="Kanehori K."/>
            <person name="Takahashi-Fujii A."/>
            <person name="Hara H."/>
            <person name="Tanase T.-O."/>
            <person name="Nomura Y."/>
            <person name="Togiya S."/>
            <person name="Komai F."/>
            <person name="Hara R."/>
            <person name="Takeuchi K."/>
            <person name="Arita M."/>
            <person name="Imose N."/>
            <person name="Musashino K."/>
            <person name="Yuuki H."/>
            <person name="Oshima A."/>
            <person name="Sasaki N."/>
            <person name="Aotsuka S."/>
            <person name="Yoshikawa Y."/>
            <person name="Matsunawa H."/>
            <person name="Ichihara T."/>
            <person name="Shiohata N."/>
            <person name="Sano S."/>
            <person name="Moriya S."/>
            <person name="Momiyama H."/>
            <person name="Satoh N."/>
            <person name="Takami S."/>
            <person name="Terashima Y."/>
            <person name="Suzuki O."/>
            <person name="Nakagawa S."/>
            <person name="Senoh A."/>
            <person name="Mizoguchi H."/>
            <person name="Goto Y."/>
            <person name="Shimizu F."/>
            <person name="Wakebe H."/>
            <person name="Hishigaki H."/>
            <person name="Watanabe T."/>
            <person name="Sugiyama A."/>
            <person name="Takemoto M."/>
            <person name="Kawakami B."/>
            <person name="Yamazaki M."/>
            <person name="Watanabe K."/>
            <person name="Kumagai A."/>
            <person name="Itakura S."/>
            <person name="Fukuzumi Y."/>
            <person name="Fujimori Y."/>
            <person name="Komiyama M."/>
            <person name="Tashiro H."/>
            <person name="Tanigami A."/>
            <person name="Fujiwara T."/>
            <person name="Ono T."/>
            <person name="Yamada K."/>
            <person name="Fujii Y."/>
            <person name="Ozaki K."/>
            <person name="Hirao M."/>
            <person name="Ohmori Y."/>
            <person name="Kawabata A."/>
            <person name="Hikiji T."/>
            <person name="Kobatake N."/>
            <person name="Inagaki H."/>
            <person name="Ikema Y."/>
            <person name="Okamoto S."/>
            <person name="Okitani R."/>
            <person name="Kawakami T."/>
            <person name="Noguchi S."/>
            <person name="Itoh T."/>
            <person name="Shigeta K."/>
            <person name="Senba T."/>
            <person name="Matsumura K."/>
            <person name="Nakajima Y."/>
            <person name="Mizuno T."/>
            <person name="Morinaga M."/>
            <person name="Sasaki M."/>
            <person name="Togashi T."/>
            <person name="Oyama M."/>
            <person name="Hata H."/>
            <person name="Watanabe M."/>
            <person name="Komatsu T."/>
            <person name="Mizushima-Sugano J."/>
            <person name="Satoh T."/>
            <person name="Shirai Y."/>
            <person name="Takahashi Y."/>
            <person name="Nakagawa K."/>
            <person name="Okumura K."/>
            <person name="Nagase T."/>
            <person name="Nomura N."/>
            <person name="Kikuchi H."/>
            <person name="Masuho Y."/>
            <person name="Yamashita R."/>
            <person name="Nakai K."/>
            <person name="Yada T."/>
            <person name="Nakamura Y."/>
            <person name="Ohara O."/>
            <person name="Isogai T."/>
            <person name="Sugano S."/>
        </authorList>
    </citation>
    <scope>NUCLEOTIDE SEQUENCE [LARGE SCALE MRNA] (ISOFORM 1)</scope>
    <scope>VARIANT VAL-48</scope>
    <source>
        <tissue>Liver</tissue>
    </source>
</reference>
<reference key="6">
    <citation type="submission" date="2006-01" db="EMBL/GenBank/DDBJ databases">
        <authorList>
            <person name="Guillemette C."/>
            <person name="Levesque E."/>
            <person name="Girard H."/>
            <person name="Bernard O."/>
        </authorList>
    </citation>
    <scope>NUCLEOTIDE SEQUENCE [MRNA] (ISOFORM 2)</scope>
</reference>
<reference key="7">
    <citation type="journal article" date="2005" name="Nature">
        <title>Generation and annotation of the DNA sequences of human chromosomes 2 and 4.</title>
        <authorList>
            <person name="Hillier L.W."/>
            <person name="Graves T.A."/>
            <person name="Fulton R.S."/>
            <person name="Fulton L.A."/>
            <person name="Pepin K.H."/>
            <person name="Minx P."/>
            <person name="Wagner-McPherson C."/>
            <person name="Layman D."/>
            <person name="Wylie K."/>
            <person name="Sekhon M."/>
            <person name="Becker M.C."/>
            <person name="Fewell G.A."/>
            <person name="Delehaunty K.D."/>
            <person name="Miner T.L."/>
            <person name="Nash W.E."/>
            <person name="Kremitzki C."/>
            <person name="Oddy L."/>
            <person name="Du H."/>
            <person name="Sun H."/>
            <person name="Bradshaw-Cordum H."/>
            <person name="Ali J."/>
            <person name="Carter J."/>
            <person name="Cordes M."/>
            <person name="Harris A."/>
            <person name="Isak A."/>
            <person name="van Brunt A."/>
            <person name="Nguyen C."/>
            <person name="Du F."/>
            <person name="Courtney L."/>
            <person name="Kalicki J."/>
            <person name="Ozersky P."/>
            <person name="Abbott S."/>
            <person name="Armstrong J."/>
            <person name="Belter E.A."/>
            <person name="Caruso L."/>
            <person name="Cedroni M."/>
            <person name="Cotton M."/>
            <person name="Davidson T."/>
            <person name="Desai A."/>
            <person name="Elliott G."/>
            <person name="Erb T."/>
            <person name="Fronick C."/>
            <person name="Gaige T."/>
            <person name="Haakenson W."/>
            <person name="Haglund K."/>
            <person name="Holmes A."/>
            <person name="Harkins R."/>
            <person name="Kim K."/>
            <person name="Kruchowski S.S."/>
            <person name="Strong C.M."/>
            <person name="Grewal N."/>
            <person name="Goyea E."/>
            <person name="Hou S."/>
            <person name="Levy A."/>
            <person name="Martinka S."/>
            <person name="Mead K."/>
            <person name="McLellan M.D."/>
            <person name="Meyer R."/>
            <person name="Randall-Maher J."/>
            <person name="Tomlinson C."/>
            <person name="Dauphin-Kohlberg S."/>
            <person name="Kozlowicz-Reilly A."/>
            <person name="Shah N."/>
            <person name="Swearengen-Shahid S."/>
            <person name="Snider J."/>
            <person name="Strong J.T."/>
            <person name="Thompson J."/>
            <person name="Yoakum M."/>
            <person name="Leonard S."/>
            <person name="Pearman C."/>
            <person name="Trani L."/>
            <person name="Radionenko M."/>
            <person name="Waligorski J.E."/>
            <person name="Wang C."/>
            <person name="Rock S.M."/>
            <person name="Tin-Wollam A.-M."/>
            <person name="Maupin R."/>
            <person name="Latreille P."/>
            <person name="Wendl M.C."/>
            <person name="Yang S.-P."/>
            <person name="Pohl C."/>
            <person name="Wallis J.W."/>
            <person name="Spieth J."/>
            <person name="Bieri T.A."/>
            <person name="Berkowicz N."/>
            <person name="Nelson J.O."/>
            <person name="Osborne J."/>
            <person name="Ding L."/>
            <person name="Meyer R."/>
            <person name="Sabo A."/>
            <person name="Shotland Y."/>
            <person name="Sinha P."/>
            <person name="Wohldmann P.E."/>
            <person name="Cook L.L."/>
            <person name="Hickenbotham M.T."/>
            <person name="Eldred J."/>
            <person name="Williams D."/>
            <person name="Jones T.A."/>
            <person name="She X."/>
            <person name="Ciccarelli F.D."/>
            <person name="Izaurralde E."/>
            <person name="Taylor J."/>
            <person name="Schmutz J."/>
            <person name="Myers R.M."/>
            <person name="Cox D.R."/>
            <person name="Huang X."/>
            <person name="McPherson J.D."/>
            <person name="Mardis E.R."/>
            <person name="Clifton S.W."/>
            <person name="Warren W.C."/>
            <person name="Chinwalla A.T."/>
            <person name="Eddy S.R."/>
            <person name="Marra M.A."/>
            <person name="Ovcharenko I."/>
            <person name="Furey T.S."/>
            <person name="Miller W."/>
            <person name="Eichler E.E."/>
            <person name="Bork P."/>
            <person name="Suyama M."/>
            <person name="Torrents D."/>
            <person name="Waterston R.H."/>
            <person name="Wilson R.K."/>
        </authorList>
    </citation>
    <scope>NUCLEOTIDE SEQUENCE [LARGE SCALE GENOMIC DNA]</scope>
</reference>
<reference key="8">
    <citation type="submission" date="2005-07" db="EMBL/GenBank/DDBJ databases">
        <authorList>
            <person name="Mural R.J."/>
            <person name="Istrail S."/>
            <person name="Sutton G."/>
            <person name="Florea L."/>
            <person name="Halpern A.L."/>
            <person name="Mobarry C.M."/>
            <person name="Lippert R."/>
            <person name="Walenz B."/>
            <person name="Shatkay H."/>
            <person name="Dew I."/>
            <person name="Miller J.R."/>
            <person name="Flanigan M.J."/>
            <person name="Edwards N.J."/>
            <person name="Bolanos R."/>
            <person name="Fasulo D."/>
            <person name="Halldorsson B.V."/>
            <person name="Hannenhalli S."/>
            <person name="Turner R."/>
            <person name="Yooseph S."/>
            <person name="Lu F."/>
            <person name="Nusskern D.R."/>
            <person name="Shue B.C."/>
            <person name="Zheng X.H."/>
            <person name="Zhong F."/>
            <person name="Delcher A.L."/>
            <person name="Huson D.H."/>
            <person name="Kravitz S.A."/>
            <person name="Mouchard L."/>
            <person name="Reinert K."/>
            <person name="Remington K.A."/>
            <person name="Clark A.G."/>
            <person name="Waterman M.S."/>
            <person name="Eichler E.E."/>
            <person name="Adams M.D."/>
            <person name="Hunkapiller M.W."/>
            <person name="Myers E.W."/>
            <person name="Venter J.C."/>
        </authorList>
    </citation>
    <scope>NUCLEOTIDE SEQUENCE [LARGE SCALE GENOMIC DNA]</scope>
</reference>
<reference key="9">
    <citation type="journal article" date="2004" name="Genome Res.">
        <title>The status, quality, and expansion of the NIH full-length cDNA project: the Mammalian Gene Collection (MGC).</title>
        <authorList>
            <consortium name="The MGC Project Team"/>
        </authorList>
    </citation>
    <scope>NUCLEOTIDE SEQUENCE [LARGE SCALE MRNA] (ISOFORMS 1 AND 2)</scope>
</reference>
<reference key="10">
    <citation type="journal article" date="2004" name="J. Lipid Res.">
        <title>Glucuronidation of oxidized fatty acids and prostaglandins B1 and E2 by human hepatic and recombinant UDP-glucuronosyltransferases.</title>
        <authorList>
            <person name="Little J.M."/>
            <person name="Kurkela M."/>
            <person name="Sonka J."/>
            <person name="Jaentti S."/>
            <person name="Ketola R."/>
            <person name="Bratton S."/>
            <person name="Finel M."/>
            <person name="Radominska-Pandya A."/>
        </authorList>
    </citation>
    <scope>FUNCTION</scope>
    <scope>CATALYTIC ACTIVITY</scope>
    <scope>BIOPHYSICOCHEMICAL PROPERTIES</scope>
</reference>
<reference key="11">
    <citation type="journal article" date="2007" name="Pharmacogenet. Genomics">
        <title>Genetic diversity at the UGT1 locus is amplified by a novel 3' alternative splicing mechanism leading to nine additional UGT1A proteins that act as regulators of glucuronidation activity.</title>
        <authorList>
            <person name="Girard H."/>
            <person name="Levesque E."/>
            <person name="Bellemare J."/>
            <person name="Journault K."/>
            <person name="Caillier B."/>
            <person name="Guillemette C."/>
        </authorList>
    </citation>
    <scope>FUNCTION (ISOFORM 2)</scope>
    <scope>ALTERNATIVE SPLICING</scope>
    <scope>TISSUE SPECIFICITY (ISOFORMS 1 AND 2)</scope>
</reference>
<reference key="12">
    <citation type="journal article" date="2007" name="J. Biol. Chem.">
        <title>Oligomerization of the UDP-glucuronosyltransferase 1A proteins: homo- and heterodimerization analysis by fluorescence resonance energy transfer and co-immunoprecipitation.</title>
        <authorList>
            <person name="Operana T.N."/>
            <person name="Tukey R.H."/>
        </authorList>
    </citation>
    <scope>SUBUNIT</scope>
    <scope>SUBCELLULAR LOCATION</scope>
</reference>
<reference key="13">
    <citation type="journal article" date="2008" name="Biochem. Pharmacol.">
        <title>Identification of human UDP-glucuronosyltransferases catalyzing hepatic 1alpha,25-dihydroxyvitamin D3 conjugation.</title>
        <authorList>
            <person name="Hashizume T."/>
            <person name="Xu Y."/>
            <person name="Mohutsky M.A."/>
            <person name="Alberts J."/>
            <person name="Hadden C."/>
            <person name="Kalhorn T.F."/>
            <person name="Isoherranen N."/>
            <person name="Shuhart M.C."/>
            <person name="Thummel K.E."/>
        </authorList>
    </citation>
    <scope>FUNCTION (ISOFORM 1)</scope>
    <scope>CATALYTIC ACTIVITY</scope>
    <scope>BIOPHYSICOCHEMICAL PROPERTIES</scope>
    <scope>SUBSTRATE SPECIFICITY</scope>
</reference>
<reference key="14">
    <citation type="journal article" date="2008" name="Drug Metab. Dispos.">
        <title>The configuration of the 17-hydroxy group variably influences the glucuronidation of beta-estradiol and epiestradiol by human UDP-glucuronosyltransferases.</title>
        <authorList>
            <person name="Itaeaho K."/>
            <person name="Mackenzie P.I."/>
            <person name="Ikushiro S."/>
            <person name="Miners J.O."/>
            <person name="Finel M."/>
        </authorList>
    </citation>
    <scope>BIOPHYSICOCHEMICAL PROPERTIES</scope>
</reference>
<reference key="15">
    <citation type="journal article" date="2009" name="J. Proteome Res.">
        <title>Glycoproteomics analysis of human liver tissue by combination of multiple enzyme digestion and hydrazide chemistry.</title>
        <authorList>
            <person name="Chen R."/>
            <person name="Jiang X."/>
            <person name="Sun D."/>
            <person name="Han G."/>
            <person name="Wang F."/>
            <person name="Ye M."/>
            <person name="Wang L."/>
            <person name="Zou H."/>
        </authorList>
    </citation>
    <scope>GLYCOSYLATION [LARGE SCALE ANALYSIS] AT ASN-142 AND ASN-348</scope>
    <source>
        <tissue>Liver</tissue>
    </source>
</reference>
<reference key="16">
    <citation type="journal article" date="2010" name="Drug Metab. Dispos.">
        <title>Alternatively spliced products of the UGT1A gene interact with the enzymatically active proteins to inhibit glucuronosyltransferase activity in vitro.</title>
        <authorList>
            <person name="Bellemare J."/>
            <person name="Rouleau M."/>
            <person name="Girard H."/>
            <person name="Harvey M."/>
            <person name="Guillemette C."/>
        </authorList>
    </citation>
    <scope>FUNCTION (ISOFORM 2)</scope>
    <scope>SUBUNIT</scope>
</reference>
<reference key="17">
    <citation type="journal article" date="2013" name="Drug Metab. Dispos.">
        <title>Regiospecificity and stereospecificity of human UDP-glucuronosyltransferases in the glucuronidation of estriol, 16-epiestriol, 17-epiestriol, and 13-epiestradiol.</title>
        <authorList>
            <person name="Sneitz N."/>
            <person name="Vahermo M."/>
            <person name="Mosorin J."/>
            <person name="Laakkonen L."/>
            <person name="Poirier D."/>
            <person name="Finel M."/>
        </authorList>
    </citation>
    <scope>BIOPHYSICOCHEMICAL PROPERTIES</scope>
</reference>
<reference key="18">
    <citation type="journal article" date="2014" name="J. Proteomics">
        <title>An enzyme assisted RP-RPLC approach for in-depth analysis of human liver phosphoproteome.</title>
        <authorList>
            <person name="Bian Y."/>
            <person name="Song C."/>
            <person name="Cheng K."/>
            <person name="Dong M."/>
            <person name="Wang F."/>
            <person name="Huang J."/>
            <person name="Sun D."/>
            <person name="Wang L."/>
            <person name="Ye M."/>
            <person name="Zou H."/>
        </authorList>
    </citation>
    <scope>IDENTIFICATION BY MASS SPECTROMETRY [LARGE SCALE ANALYSIS]</scope>
    <source>
        <tissue>Liver</tissue>
    </source>
</reference>
<reference key="19">
    <citation type="journal article" date="2009" name="Hum. Mutat.">
        <title>Analysis of inherited genetic variations at the UGT1 locus in the French-Canadian population.</title>
        <authorList>
            <person name="Menard V."/>
            <person name="Girard H."/>
            <person name="Harvey M."/>
            <person name="Perusse L."/>
            <person name="Guillemette C."/>
        </authorList>
    </citation>
    <scope>VARIANTS THR-24 AND VAL-48</scope>
</reference>
<reference key="20">
    <citation type="journal article" date="2014" name="Endocrinology">
        <title>Human UGT1A4 and UGT1A3 conjugate 25-hydroxyvitamin D3: metabolite structure, kinetics, inducibility, and interindividual variability.</title>
        <authorList>
            <person name="Wang Z."/>
            <person name="Wong T."/>
            <person name="Hashizume T."/>
            <person name="Dickmann L.Z."/>
            <person name="Scian M."/>
            <person name="Koszewski N.J."/>
            <person name="Goff J.P."/>
            <person name="Horst R.L."/>
            <person name="Chaudhry A.S."/>
            <person name="Schuetz E.G."/>
            <person name="Thummel K.E."/>
        </authorList>
    </citation>
    <scope>FUNCTION (ISOFORM 1)</scope>
    <scope>CATALYTIC ACTIVITY</scope>
    <scope>BIOPHYSICOCHEMICAL PROPERTIES</scope>
    <scope>VARIANT VAL-48</scope>
</reference>
<keyword id="KW-0025">Alternative splicing</keyword>
<keyword id="KW-0256">Endoplasmic reticulum</keyword>
<keyword id="KW-0325">Glycoprotein</keyword>
<keyword id="KW-0328">Glycosyltransferase</keyword>
<keyword id="KW-0443">Lipid metabolism</keyword>
<keyword id="KW-0472">Membrane</keyword>
<keyword id="KW-1267">Proteomics identification</keyword>
<keyword id="KW-1185">Reference proteome</keyword>
<keyword id="KW-0732">Signal</keyword>
<keyword id="KW-0808">Transferase</keyword>
<keyword id="KW-0812">Transmembrane</keyword>
<keyword id="KW-1133">Transmembrane helix</keyword>